<comment type="function">
    <text evidence="1">Catalyzes the initial step of the lipid cycle reactions in the biosynthesis of the cell wall peptidoglycan: transfers peptidoglycan precursor phospho-MurNAc-pentapeptide from UDP-MurNAc-pentapeptide onto the lipid carrier undecaprenyl phosphate, yielding undecaprenyl-pyrophosphoryl-MurNAc-pentapeptide, known as lipid I.</text>
</comment>
<comment type="catalytic activity">
    <reaction evidence="1">
        <text>UDP-N-acetyl-alpha-D-muramoyl-L-alanyl-gamma-D-glutamyl-L-lysyl-D-alanyl-D-alanine + di-trans,octa-cis-undecaprenyl phosphate = Mur2Ac(oyl-L-Ala-gamma-D-Glu-L-Lys-D-Ala-D-Ala)-di-trans,octa-cis-undecaprenyl diphosphate + UMP</text>
        <dbReference type="Rhea" id="RHEA:21920"/>
        <dbReference type="ChEBI" id="CHEBI:57865"/>
        <dbReference type="ChEBI" id="CHEBI:60032"/>
        <dbReference type="ChEBI" id="CHEBI:60392"/>
        <dbReference type="ChEBI" id="CHEBI:70758"/>
        <dbReference type="EC" id="2.7.8.13"/>
    </reaction>
</comment>
<comment type="cofactor">
    <cofactor evidence="1">
        <name>Mg(2+)</name>
        <dbReference type="ChEBI" id="CHEBI:18420"/>
    </cofactor>
</comment>
<comment type="pathway">
    <text evidence="1">Cell wall biogenesis; peptidoglycan biosynthesis.</text>
</comment>
<comment type="subcellular location">
    <subcellularLocation>
        <location evidence="1">Cell membrane</location>
        <topology evidence="1">Multi-pass membrane protein</topology>
    </subcellularLocation>
</comment>
<comment type="similarity">
    <text evidence="1">Belongs to the glycosyltransferase 4 family. MraY subfamily.</text>
</comment>
<protein>
    <recommendedName>
        <fullName evidence="1">Phospho-N-acetylmuramoyl-pentapeptide-transferase</fullName>
        <ecNumber evidence="1">2.7.8.13</ecNumber>
    </recommendedName>
    <alternativeName>
        <fullName evidence="1">UDP-MurNAc-pentapeptide phosphotransferase</fullName>
    </alternativeName>
</protein>
<evidence type="ECO:0000255" key="1">
    <source>
        <dbReference type="HAMAP-Rule" id="MF_00038"/>
    </source>
</evidence>
<feature type="chain" id="PRO_0000108904" description="Phospho-N-acetylmuramoyl-pentapeptide-transferase">
    <location>
        <begin position="1"/>
        <end position="326"/>
    </location>
</feature>
<feature type="transmembrane region" description="Helical" evidence="1">
    <location>
        <begin position="3"/>
        <end position="23"/>
    </location>
</feature>
<feature type="transmembrane region" description="Helical" evidence="1">
    <location>
        <begin position="51"/>
        <end position="71"/>
    </location>
</feature>
<feature type="transmembrane region" description="Helical" evidence="1">
    <location>
        <begin position="79"/>
        <end position="99"/>
    </location>
</feature>
<feature type="transmembrane region" description="Helical" evidence="1">
    <location>
        <begin position="115"/>
        <end position="135"/>
    </location>
</feature>
<feature type="transmembrane region" description="Helical" evidence="1">
    <location>
        <begin position="138"/>
        <end position="158"/>
    </location>
</feature>
<feature type="transmembrane region" description="Helical" evidence="1">
    <location>
        <begin position="169"/>
        <end position="189"/>
    </location>
</feature>
<feature type="transmembrane region" description="Helical" evidence="1">
    <location>
        <begin position="195"/>
        <end position="215"/>
    </location>
</feature>
<feature type="transmembrane region" description="Helical" evidence="1">
    <location>
        <begin position="221"/>
        <end position="243"/>
    </location>
</feature>
<feature type="transmembrane region" description="Helical" evidence="1">
    <location>
        <begin position="306"/>
        <end position="326"/>
    </location>
</feature>
<name>MRAY_STRPN</name>
<keyword id="KW-0131">Cell cycle</keyword>
<keyword id="KW-0132">Cell division</keyword>
<keyword id="KW-1003">Cell membrane</keyword>
<keyword id="KW-0133">Cell shape</keyword>
<keyword id="KW-0961">Cell wall biogenesis/degradation</keyword>
<keyword id="KW-0460">Magnesium</keyword>
<keyword id="KW-0472">Membrane</keyword>
<keyword id="KW-0479">Metal-binding</keyword>
<keyword id="KW-0573">Peptidoglycan synthesis</keyword>
<keyword id="KW-1185">Reference proteome</keyword>
<keyword id="KW-0808">Transferase</keyword>
<keyword id="KW-0812">Transmembrane</keyword>
<keyword id="KW-1133">Transmembrane helix</keyword>
<sequence length="326" mass="36075">MFISISAGIVTFLLTLVEIPAFIQFYRKAQITGQQMHEDVKQHQAKAGTPTMGGLVFLITSVLVAFFFALFSSQFSNNVGMILFILVLYGLVGFLDDFLKVFRKINEGLNPKQKLALQLLGGVIFYLFYERGGDILSVFGYPVHLGFFYIFFALFWLVGFSNAVNLTDGVDGLASISVVISLSAYGVIAYVQGQMDILLVILAMIGGLLGFFIFNHKPAKVFMGDVGSLALGGMLAAISMALHQEWTLLIIGIVYVFETTSVMMQVSYFKLTGGKRIFRMTPVHHHFELGGLSGKGNPWSEWKVDFFFWGVGLLASLLTLAILYLM</sequence>
<accession>P0CB59</accession>
<accession>Q9ZHA5</accession>
<dbReference type="EC" id="2.7.8.13" evidence="1"/>
<dbReference type="EMBL" id="AE005672">
    <property type="protein sequence ID" value="AAK74512.1"/>
    <property type="molecule type" value="Genomic_DNA"/>
</dbReference>
<dbReference type="PIR" id="G95039">
    <property type="entry name" value="G95039"/>
</dbReference>
<dbReference type="RefSeq" id="WP_000470785.1">
    <property type="nucleotide sequence ID" value="NZ_CP155539.1"/>
</dbReference>
<dbReference type="SMR" id="P0CB59"/>
<dbReference type="PaxDb" id="170187-SP_0337"/>
<dbReference type="DNASU" id="930154"/>
<dbReference type="EnsemblBacteria" id="AAK74512">
    <property type="protein sequence ID" value="AAK74512"/>
    <property type="gene ID" value="SP_0337"/>
</dbReference>
<dbReference type="KEGG" id="spn:SP_0337"/>
<dbReference type="eggNOG" id="COG0472">
    <property type="taxonomic scope" value="Bacteria"/>
</dbReference>
<dbReference type="PhylomeDB" id="P0CB59"/>
<dbReference type="BioCyc" id="SPNE170187:G1FZB-346-MONOMER"/>
<dbReference type="UniPathway" id="UPA00219"/>
<dbReference type="Proteomes" id="UP000000585">
    <property type="component" value="Chromosome"/>
</dbReference>
<dbReference type="GO" id="GO:0005886">
    <property type="term" value="C:plasma membrane"/>
    <property type="evidence" value="ECO:0007669"/>
    <property type="project" value="UniProtKB-SubCell"/>
</dbReference>
<dbReference type="GO" id="GO:0046872">
    <property type="term" value="F:metal ion binding"/>
    <property type="evidence" value="ECO:0007669"/>
    <property type="project" value="UniProtKB-KW"/>
</dbReference>
<dbReference type="GO" id="GO:0008963">
    <property type="term" value="F:phospho-N-acetylmuramoyl-pentapeptide-transferase activity"/>
    <property type="evidence" value="ECO:0007669"/>
    <property type="project" value="UniProtKB-UniRule"/>
</dbReference>
<dbReference type="GO" id="GO:0051301">
    <property type="term" value="P:cell division"/>
    <property type="evidence" value="ECO:0007669"/>
    <property type="project" value="UniProtKB-KW"/>
</dbReference>
<dbReference type="GO" id="GO:0071555">
    <property type="term" value="P:cell wall organization"/>
    <property type="evidence" value="ECO:0007669"/>
    <property type="project" value="UniProtKB-KW"/>
</dbReference>
<dbReference type="GO" id="GO:0009252">
    <property type="term" value="P:peptidoglycan biosynthetic process"/>
    <property type="evidence" value="ECO:0007669"/>
    <property type="project" value="UniProtKB-UniRule"/>
</dbReference>
<dbReference type="GO" id="GO:0008360">
    <property type="term" value="P:regulation of cell shape"/>
    <property type="evidence" value="ECO:0007669"/>
    <property type="project" value="UniProtKB-KW"/>
</dbReference>
<dbReference type="CDD" id="cd06852">
    <property type="entry name" value="GT_MraY"/>
    <property type="match status" value="1"/>
</dbReference>
<dbReference type="HAMAP" id="MF_00038">
    <property type="entry name" value="MraY"/>
    <property type="match status" value="1"/>
</dbReference>
<dbReference type="InterPro" id="IPR000715">
    <property type="entry name" value="Glycosyl_transferase_4"/>
</dbReference>
<dbReference type="InterPro" id="IPR003524">
    <property type="entry name" value="PNAcMuramoyl-5peptid_Trfase"/>
</dbReference>
<dbReference type="InterPro" id="IPR018480">
    <property type="entry name" value="PNAcMuramoyl-5peptid_Trfase_CS"/>
</dbReference>
<dbReference type="NCBIfam" id="TIGR00445">
    <property type="entry name" value="mraY"/>
    <property type="match status" value="1"/>
</dbReference>
<dbReference type="PANTHER" id="PTHR22926">
    <property type="entry name" value="PHOSPHO-N-ACETYLMURAMOYL-PENTAPEPTIDE-TRANSFERASE"/>
    <property type="match status" value="1"/>
</dbReference>
<dbReference type="PANTHER" id="PTHR22926:SF5">
    <property type="entry name" value="PHOSPHO-N-ACETYLMURAMOYL-PENTAPEPTIDE-TRANSFERASE HOMOLOG"/>
    <property type="match status" value="1"/>
</dbReference>
<dbReference type="Pfam" id="PF00953">
    <property type="entry name" value="Glycos_transf_4"/>
    <property type="match status" value="1"/>
</dbReference>
<dbReference type="Pfam" id="PF10555">
    <property type="entry name" value="MraY_sig1"/>
    <property type="match status" value="1"/>
</dbReference>
<dbReference type="PROSITE" id="PS01347">
    <property type="entry name" value="MRAY_1"/>
    <property type="match status" value="1"/>
</dbReference>
<dbReference type="PROSITE" id="PS01348">
    <property type="entry name" value="MRAY_2"/>
    <property type="match status" value="1"/>
</dbReference>
<reference key="1">
    <citation type="journal article" date="2001" name="Science">
        <title>Complete genome sequence of a virulent isolate of Streptococcus pneumoniae.</title>
        <authorList>
            <person name="Tettelin H."/>
            <person name="Nelson K.E."/>
            <person name="Paulsen I.T."/>
            <person name="Eisen J.A."/>
            <person name="Read T.D."/>
            <person name="Peterson S.N."/>
            <person name="Heidelberg J.F."/>
            <person name="DeBoy R.T."/>
            <person name="Haft D.H."/>
            <person name="Dodson R.J."/>
            <person name="Durkin A.S."/>
            <person name="Gwinn M.L."/>
            <person name="Kolonay J.F."/>
            <person name="Nelson W.C."/>
            <person name="Peterson J.D."/>
            <person name="Umayam L.A."/>
            <person name="White O."/>
            <person name="Salzberg S.L."/>
            <person name="Lewis M.R."/>
            <person name="Radune D."/>
            <person name="Holtzapple E.K."/>
            <person name="Khouri H.M."/>
            <person name="Wolf A.M."/>
            <person name="Utterback T.R."/>
            <person name="Hansen C.L."/>
            <person name="McDonald L.A."/>
            <person name="Feldblyum T.V."/>
            <person name="Angiuoli S.V."/>
            <person name="Dickinson T."/>
            <person name="Hickey E.K."/>
            <person name="Holt I.E."/>
            <person name="Loftus B.J."/>
            <person name="Yang F."/>
            <person name="Smith H.O."/>
            <person name="Venter J.C."/>
            <person name="Dougherty B.A."/>
            <person name="Morrison D.A."/>
            <person name="Hollingshead S.K."/>
            <person name="Fraser C.M."/>
        </authorList>
    </citation>
    <scope>NUCLEOTIDE SEQUENCE [LARGE SCALE GENOMIC DNA]</scope>
    <source>
        <strain>ATCC BAA-334 / TIGR4</strain>
    </source>
</reference>
<proteinExistence type="inferred from homology"/>
<gene>
    <name evidence="1" type="primary">mraY</name>
    <name type="ordered locus">SP_0337</name>
</gene>
<organism>
    <name type="scientific">Streptococcus pneumoniae serotype 4 (strain ATCC BAA-334 / TIGR4)</name>
    <dbReference type="NCBI Taxonomy" id="170187"/>
    <lineage>
        <taxon>Bacteria</taxon>
        <taxon>Bacillati</taxon>
        <taxon>Bacillota</taxon>
        <taxon>Bacilli</taxon>
        <taxon>Lactobacillales</taxon>
        <taxon>Streptococcaceae</taxon>
        <taxon>Streptococcus</taxon>
    </lineage>
</organism>